<sequence length="546" mass="60069">MTKYIFVTGGVVSSVGKGIGVASIGRLLKSRGLSVSVMKLDPYLNVDPGTMSPYQHGEVFVTADGAETDLDLGHYERFIDVNLSRLSNVTTGQIYSAVIAKERRGDYLGGTIQVIPHITNEIKSRIGSLARSSQADVVIVEIGGTVGDIESLPFLEAIRQMRKDVGRDNILYIHVTLLPHISTGELKTKPTQHSVMALRNVGISADIILCRADRPIDDEIREKIAFFADVDVRAVIPVPTVDSIYEVPLVLEDMGLGDYLVERLGLPATPPDLEEWRALVARIRQEKRRVPIALVGKYVELHDAYISVVEALHHAGLEQSIDIDIRWIAAEEVEREGPARLLSGVYGILVPGGFGERGIEGKIAAADYARIHGIPYLGLCLGMQCATIAFARHVLGTHDVNSTEFNPQTAHPVIDLMPDQRDITEKGGTMRLGLYPCDLVPGTRAHAAYGCDRVEERHRHRFEFNNRYRSVLEAAGLVISGISPDKRLVEIIELRDHPWYVASQFHPEFQSRPGKPHPLFRGFVAAAAQTLLAGEARQLPLVESTS</sequence>
<feature type="chain" id="PRO_1000139413" description="CTP synthase">
    <location>
        <begin position="1"/>
        <end position="546"/>
    </location>
</feature>
<feature type="domain" description="Glutamine amidotransferase type-1" evidence="1">
    <location>
        <begin position="291"/>
        <end position="533"/>
    </location>
</feature>
<feature type="region of interest" description="Amidoligase domain" evidence="1">
    <location>
        <begin position="1"/>
        <end position="266"/>
    </location>
</feature>
<feature type="active site" description="Nucleophile; for glutamine hydrolysis" evidence="1">
    <location>
        <position position="380"/>
    </location>
</feature>
<feature type="active site" evidence="1">
    <location>
        <position position="506"/>
    </location>
</feature>
<feature type="active site" evidence="1">
    <location>
        <position position="508"/>
    </location>
</feature>
<feature type="binding site" evidence="1">
    <location>
        <position position="13"/>
    </location>
    <ligand>
        <name>CTP</name>
        <dbReference type="ChEBI" id="CHEBI:37563"/>
        <note>allosteric inhibitor</note>
    </ligand>
</feature>
<feature type="binding site" evidence="1">
    <location>
        <position position="13"/>
    </location>
    <ligand>
        <name>UTP</name>
        <dbReference type="ChEBI" id="CHEBI:46398"/>
    </ligand>
</feature>
<feature type="binding site" evidence="1">
    <location>
        <begin position="14"/>
        <end position="19"/>
    </location>
    <ligand>
        <name>ATP</name>
        <dbReference type="ChEBI" id="CHEBI:30616"/>
    </ligand>
</feature>
<feature type="binding site" evidence="1">
    <location>
        <position position="54"/>
    </location>
    <ligand>
        <name>L-glutamine</name>
        <dbReference type="ChEBI" id="CHEBI:58359"/>
    </ligand>
</feature>
<feature type="binding site" evidence="1">
    <location>
        <position position="71"/>
    </location>
    <ligand>
        <name>ATP</name>
        <dbReference type="ChEBI" id="CHEBI:30616"/>
    </ligand>
</feature>
<feature type="binding site" evidence="1">
    <location>
        <position position="71"/>
    </location>
    <ligand>
        <name>Mg(2+)</name>
        <dbReference type="ChEBI" id="CHEBI:18420"/>
    </ligand>
</feature>
<feature type="binding site" evidence="1">
    <location>
        <position position="141"/>
    </location>
    <ligand>
        <name>Mg(2+)</name>
        <dbReference type="ChEBI" id="CHEBI:18420"/>
    </ligand>
</feature>
<feature type="binding site" evidence="1">
    <location>
        <begin position="148"/>
        <end position="150"/>
    </location>
    <ligand>
        <name>CTP</name>
        <dbReference type="ChEBI" id="CHEBI:37563"/>
        <note>allosteric inhibitor</note>
    </ligand>
</feature>
<feature type="binding site" evidence="1">
    <location>
        <begin position="187"/>
        <end position="192"/>
    </location>
    <ligand>
        <name>CTP</name>
        <dbReference type="ChEBI" id="CHEBI:37563"/>
        <note>allosteric inhibitor</note>
    </ligand>
</feature>
<feature type="binding site" evidence="1">
    <location>
        <begin position="187"/>
        <end position="192"/>
    </location>
    <ligand>
        <name>UTP</name>
        <dbReference type="ChEBI" id="CHEBI:46398"/>
    </ligand>
</feature>
<feature type="binding site" evidence="1">
    <location>
        <position position="223"/>
    </location>
    <ligand>
        <name>CTP</name>
        <dbReference type="ChEBI" id="CHEBI:37563"/>
        <note>allosteric inhibitor</note>
    </ligand>
</feature>
<feature type="binding site" evidence="1">
    <location>
        <position position="223"/>
    </location>
    <ligand>
        <name>UTP</name>
        <dbReference type="ChEBI" id="CHEBI:46398"/>
    </ligand>
</feature>
<feature type="binding site" evidence="1">
    <location>
        <position position="353"/>
    </location>
    <ligand>
        <name>L-glutamine</name>
        <dbReference type="ChEBI" id="CHEBI:58359"/>
    </ligand>
</feature>
<feature type="binding site" evidence="1">
    <location>
        <begin position="381"/>
        <end position="384"/>
    </location>
    <ligand>
        <name>L-glutamine</name>
        <dbReference type="ChEBI" id="CHEBI:58359"/>
    </ligand>
</feature>
<feature type="binding site" evidence="1">
    <location>
        <position position="404"/>
    </location>
    <ligand>
        <name>L-glutamine</name>
        <dbReference type="ChEBI" id="CHEBI:58359"/>
    </ligand>
</feature>
<feature type="binding site" evidence="1">
    <location>
        <position position="461"/>
    </location>
    <ligand>
        <name>L-glutamine</name>
        <dbReference type="ChEBI" id="CHEBI:58359"/>
    </ligand>
</feature>
<evidence type="ECO:0000255" key="1">
    <source>
        <dbReference type="HAMAP-Rule" id="MF_01227"/>
    </source>
</evidence>
<organism>
    <name type="scientific">Chloroflexus aurantiacus (strain ATCC 29366 / DSM 635 / J-10-fl)</name>
    <dbReference type="NCBI Taxonomy" id="324602"/>
    <lineage>
        <taxon>Bacteria</taxon>
        <taxon>Bacillati</taxon>
        <taxon>Chloroflexota</taxon>
        <taxon>Chloroflexia</taxon>
        <taxon>Chloroflexales</taxon>
        <taxon>Chloroflexineae</taxon>
        <taxon>Chloroflexaceae</taxon>
        <taxon>Chloroflexus</taxon>
    </lineage>
</organism>
<name>PYRG_CHLAA</name>
<protein>
    <recommendedName>
        <fullName evidence="1">CTP synthase</fullName>
        <ecNumber evidence="1">6.3.4.2</ecNumber>
    </recommendedName>
    <alternativeName>
        <fullName evidence="1">Cytidine 5'-triphosphate synthase</fullName>
    </alternativeName>
    <alternativeName>
        <fullName evidence="1">Cytidine triphosphate synthetase</fullName>
        <shortName evidence="1">CTP synthetase</shortName>
        <shortName evidence="1">CTPS</shortName>
    </alternativeName>
    <alternativeName>
        <fullName evidence="1">UTP--ammonia ligase</fullName>
    </alternativeName>
</protein>
<reference key="1">
    <citation type="journal article" date="2011" name="BMC Genomics">
        <title>Complete genome sequence of the filamentous anoxygenic phototrophic bacterium Chloroflexus aurantiacus.</title>
        <authorList>
            <person name="Tang K.H."/>
            <person name="Barry K."/>
            <person name="Chertkov O."/>
            <person name="Dalin E."/>
            <person name="Han C.S."/>
            <person name="Hauser L.J."/>
            <person name="Honchak B.M."/>
            <person name="Karbach L.E."/>
            <person name="Land M.L."/>
            <person name="Lapidus A."/>
            <person name="Larimer F.W."/>
            <person name="Mikhailova N."/>
            <person name="Pitluck S."/>
            <person name="Pierson B.K."/>
            <person name="Blankenship R.E."/>
        </authorList>
    </citation>
    <scope>NUCLEOTIDE SEQUENCE [LARGE SCALE GENOMIC DNA]</scope>
    <source>
        <strain>ATCC 29366 / DSM 635 / J-10-fl</strain>
    </source>
</reference>
<accession>A9WJ75</accession>
<keyword id="KW-0067">ATP-binding</keyword>
<keyword id="KW-0315">Glutamine amidotransferase</keyword>
<keyword id="KW-0436">Ligase</keyword>
<keyword id="KW-0460">Magnesium</keyword>
<keyword id="KW-0479">Metal-binding</keyword>
<keyword id="KW-0547">Nucleotide-binding</keyword>
<keyword id="KW-0665">Pyrimidine biosynthesis</keyword>
<keyword id="KW-1185">Reference proteome</keyword>
<proteinExistence type="inferred from homology"/>
<comment type="function">
    <text evidence="1">Catalyzes the ATP-dependent amination of UTP to CTP with either L-glutamine or ammonia as the source of nitrogen. Regulates intracellular CTP levels through interactions with the four ribonucleotide triphosphates.</text>
</comment>
<comment type="catalytic activity">
    <reaction evidence="1">
        <text>UTP + L-glutamine + ATP + H2O = CTP + L-glutamate + ADP + phosphate + 2 H(+)</text>
        <dbReference type="Rhea" id="RHEA:26426"/>
        <dbReference type="ChEBI" id="CHEBI:15377"/>
        <dbReference type="ChEBI" id="CHEBI:15378"/>
        <dbReference type="ChEBI" id="CHEBI:29985"/>
        <dbReference type="ChEBI" id="CHEBI:30616"/>
        <dbReference type="ChEBI" id="CHEBI:37563"/>
        <dbReference type="ChEBI" id="CHEBI:43474"/>
        <dbReference type="ChEBI" id="CHEBI:46398"/>
        <dbReference type="ChEBI" id="CHEBI:58359"/>
        <dbReference type="ChEBI" id="CHEBI:456216"/>
        <dbReference type="EC" id="6.3.4.2"/>
    </reaction>
</comment>
<comment type="catalytic activity">
    <reaction evidence="1">
        <text>L-glutamine + H2O = L-glutamate + NH4(+)</text>
        <dbReference type="Rhea" id="RHEA:15889"/>
        <dbReference type="ChEBI" id="CHEBI:15377"/>
        <dbReference type="ChEBI" id="CHEBI:28938"/>
        <dbReference type="ChEBI" id="CHEBI:29985"/>
        <dbReference type="ChEBI" id="CHEBI:58359"/>
    </reaction>
</comment>
<comment type="catalytic activity">
    <reaction evidence="1">
        <text>UTP + NH4(+) + ATP = CTP + ADP + phosphate + 2 H(+)</text>
        <dbReference type="Rhea" id="RHEA:16597"/>
        <dbReference type="ChEBI" id="CHEBI:15378"/>
        <dbReference type="ChEBI" id="CHEBI:28938"/>
        <dbReference type="ChEBI" id="CHEBI:30616"/>
        <dbReference type="ChEBI" id="CHEBI:37563"/>
        <dbReference type="ChEBI" id="CHEBI:43474"/>
        <dbReference type="ChEBI" id="CHEBI:46398"/>
        <dbReference type="ChEBI" id="CHEBI:456216"/>
    </reaction>
</comment>
<comment type="activity regulation">
    <text evidence="1">Allosterically activated by GTP, when glutamine is the substrate; GTP has no effect on the reaction when ammonia is the substrate. The allosteric effector GTP functions by stabilizing the protein conformation that binds the tetrahedral intermediate(s) formed during glutamine hydrolysis. Inhibited by the product CTP, via allosteric rather than competitive inhibition.</text>
</comment>
<comment type="pathway">
    <text evidence="1">Pyrimidine metabolism; CTP biosynthesis via de novo pathway; CTP from UDP: step 2/2.</text>
</comment>
<comment type="subunit">
    <text evidence="1">Homotetramer.</text>
</comment>
<comment type="miscellaneous">
    <text evidence="1">CTPSs have evolved a hybrid strategy for distinguishing between UTP and CTP. The overlapping regions of the product feedback inhibitory and substrate sites recognize a common feature in both compounds, the triphosphate moiety. To differentiate isosteric substrate and product pyrimidine rings, an additional pocket far from the expected kinase/ligase catalytic site, specifically recognizes the cytosine and ribose portions of the product inhibitor.</text>
</comment>
<comment type="similarity">
    <text evidence="1">Belongs to the CTP synthase family.</text>
</comment>
<gene>
    <name evidence="1" type="primary">pyrG</name>
    <name type="ordered locus">Caur_1122</name>
</gene>
<dbReference type="EC" id="6.3.4.2" evidence="1"/>
<dbReference type="EMBL" id="CP000909">
    <property type="protein sequence ID" value="ABY34352.1"/>
    <property type="molecule type" value="Genomic_DNA"/>
</dbReference>
<dbReference type="RefSeq" id="WP_012257008.1">
    <property type="nucleotide sequence ID" value="NC_010175.1"/>
</dbReference>
<dbReference type="RefSeq" id="YP_001634741.1">
    <property type="nucleotide sequence ID" value="NC_010175.1"/>
</dbReference>
<dbReference type="SMR" id="A9WJ75"/>
<dbReference type="FunCoup" id="A9WJ75">
    <property type="interactions" value="478"/>
</dbReference>
<dbReference type="STRING" id="324602.Caur_1122"/>
<dbReference type="MEROPS" id="C26.964"/>
<dbReference type="EnsemblBacteria" id="ABY34352">
    <property type="protein sequence ID" value="ABY34352"/>
    <property type="gene ID" value="Caur_1122"/>
</dbReference>
<dbReference type="KEGG" id="cau:Caur_1122"/>
<dbReference type="PATRIC" id="fig|324602.8.peg.1284"/>
<dbReference type="eggNOG" id="COG0504">
    <property type="taxonomic scope" value="Bacteria"/>
</dbReference>
<dbReference type="HOGENOM" id="CLU_011675_5_0_0"/>
<dbReference type="InParanoid" id="A9WJ75"/>
<dbReference type="UniPathway" id="UPA00159">
    <property type="reaction ID" value="UER00277"/>
</dbReference>
<dbReference type="Proteomes" id="UP000002008">
    <property type="component" value="Chromosome"/>
</dbReference>
<dbReference type="GO" id="GO:0005829">
    <property type="term" value="C:cytosol"/>
    <property type="evidence" value="ECO:0000318"/>
    <property type="project" value="GO_Central"/>
</dbReference>
<dbReference type="GO" id="GO:0005524">
    <property type="term" value="F:ATP binding"/>
    <property type="evidence" value="ECO:0007669"/>
    <property type="project" value="UniProtKB-KW"/>
</dbReference>
<dbReference type="GO" id="GO:0003883">
    <property type="term" value="F:CTP synthase activity"/>
    <property type="evidence" value="ECO:0000318"/>
    <property type="project" value="GO_Central"/>
</dbReference>
<dbReference type="GO" id="GO:0004359">
    <property type="term" value="F:glutaminase activity"/>
    <property type="evidence" value="ECO:0007669"/>
    <property type="project" value="RHEA"/>
</dbReference>
<dbReference type="GO" id="GO:0042802">
    <property type="term" value="F:identical protein binding"/>
    <property type="evidence" value="ECO:0000318"/>
    <property type="project" value="GO_Central"/>
</dbReference>
<dbReference type="GO" id="GO:0046872">
    <property type="term" value="F:metal ion binding"/>
    <property type="evidence" value="ECO:0007669"/>
    <property type="project" value="UniProtKB-KW"/>
</dbReference>
<dbReference type="GO" id="GO:0044210">
    <property type="term" value="P:'de novo' CTP biosynthetic process"/>
    <property type="evidence" value="ECO:0007669"/>
    <property type="project" value="UniProtKB-UniRule"/>
</dbReference>
<dbReference type="GO" id="GO:0006241">
    <property type="term" value="P:CTP biosynthetic process"/>
    <property type="evidence" value="ECO:0000318"/>
    <property type="project" value="GO_Central"/>
</dbReference>
<dbReference type="GO" id="GO:0019856">
    <property type="term" value="P:pyrimidine nucleobase biosynthetic process"/>
    <property type="evidence" value="ECO:0000318"/>
    <property type="project" value="GO_Central"/>
</dbReference>
<dbReference type="CDD" id="cd03113">
    <property type="entry name" value="CTPS_N"/>
    <property type="match status" value="1"/>
</dbReference>
<dbReference type="CDD" id="cd01746">
    <property type="entry name" value="GATase1_CTP_Synthase"/>
    <property type="match status" value="1"/>
</dbReference>
<dbReference type="FunFam" id="3.40.50.300:FF:000009">
    <property type="entry name" value="CTP synthase"/>
    <property type="match status" value="1"/>
</dbReference>
<dbReference type="FunFam" id="3.40.50.880:FF:000002">
    <property type="entry name" value="CTP synthase"/>
    <property type="match status" value="1"/>
</dbReference>
<dbReference type="Gene3D" id="3.40.50.880">
    <property type="match status" value="1"/>
</dbReference>
<dbReference type="Gene3D" id="3.40.50.300">
    <property type="entry name" value="P-loop containing nucleotide triphosphate hydrolases"/>
    <property type="match status" value="1"/>
</dbReference>
<dbReference type="HAMAP" id="MF_01227">
    <property type="entry name" value="PyrG"/>
    <property type="match status" value="1"/>
</dbReference>
<dbReference type="InterPro" id="IPR029062">
    <property type="entry name" value="Class_I_gatase-like"/>
</dbReference>
<dbReference type="InterPro" id="IPR004468">
    <property type="entry name" value="CTP_synthase"/>
</dbReference>
<dbReference type="InterPro" id="IPR017456">
    <property type="entry name" value="CTP_synthase_N"/>
</dbReference>
<dbReference type="InterPro" id="IPR017926">
    <property type="entry name" value="GATASE"/>
</dbReference>
<dbReference type="InterPro" id="IPR033828">
    <property type="entry name" value="GATase1_CTP_Synthase"/>
</dbReference>
<dbReference type="InterPro" id="IPR027417">
    <property type="entry name" value="P-loop_NTPase"/>
</dbReference>
<dbReference type="NCBIfam" id="NF003792">
    <property type="entry name" value="PRK05380.1"/>
    <property type="match status" value="1"/>
</dbReference>
<dbReference type="NCBIfam" id="TIGR00337">
    <property type="entry name" value="PyrG"/>
    <property type="match status" value="1"/>
</dbReference>
<dbReference type="PANTHER" id="PTHR11550">
    <property type="entry name" value="CTP SYNTHASE"/>
    <property type="match status" value="1"/>
</dbReference>
<dbReference type="PANTHER" id="PTHR11550:SF0">
    <property type="entry name" value="CTP SYNTHASE-RELATED"/>
    <property type="match status" value="1"/>
</dbReference>
<dbReference type="Pfam" id="PF06418">
    <property type="entry name" value="CTP_synth_N"/>
    <property type="match status" value="1"/>
</dbReference>
<dbReference type="Pfam" id="PF00117">
    <property type="entry name" value="GATase"/>
    <property type="match status" value="1"/>
</dbReference>
<dbReference type="SUPFAM" id="SSF52317">
    <property type="entry name" value="Class I glutamine amidotransferase-like"/>
    <property type="match status" value="1"/>
</dbReference>
<dbReference type="SUPFAM" id="SSF52540">
    <property type="entry name" value="P-loop containing nucleoside triphosphate hydrolases"/>
    <property type="match status" value="1"/>
</dbReference>
<dbReference type="PROSITE" id="PS51273">
    <property type="entry name" value="GATASE_TYPE_1"/>
    <property type="match status" value="1"/>
</dbReference>